<gene>
    <name type="primary">3</name>
</gene>
<name>TERM_BPPH2</name>
<comment type="function">
    <text evidence="6 7 8 9 12 17">Acts as a primer for DNA elongation during viral genomic replication (PubMed:6813861). Acts as the small terminase protein during packaging (PubMed:18674782). Recruits the phage DNA polymerase to the bacterial nucleoid (PubMed:20823229). Primer terminal protein (TP) is covalently linked to the 5'-ends of both strands of the genome through a phosphodiester bond between the beta-hydroxyl group of a serine residue and the 5'-phosphate of the terminal deoxyadenylate (dAMP) (PubMed:6813861). To start replication, the DNA polymerase forms a heterodimer with a free TP that recognizes the replication origins at both 5' ends of the linear chromosome, and initiates replication using as primer the OH-group of Ser-232 of the TP (PubMed:22210885, PubMed:25081208). Since the polymerase initiates the replication on the second thymine, the TP-dAMP initiation product slides backwards to recover the template information of the first nucleotide (PubMed:19011105).</text>
</comment>
<comment type="function">
    <text evidence="3">Hydrolyzes host peptidoglycans during virus entry.</text>
</comment>
<comment type="subunit">
    <text evidence="2 9 16 18">Interacts with the viral polymerase; this interaction allows the initiation of TP-primed DNA replication at both viral DNA ends (PubMed:22210885). Binds to ssDNA (PubMed:6779279). Interacts with the replication protein p1 (PubMed:11032825). Part of a DNA-gp3-gp16 complex (PubMed:9086269).</text>
</comment>
<comment type="subcellular location">
    <subcellularLocation>
        <location evidence="3">Virion</location>
    </subcellularLocation>
    <subcellularLocation>
        <location evidence="10">Host nucleus</location>
    </subcellularLocation>
    <text evidence="8">Associates with the host bacterial nucleoid through its N-terminal region.</text>
</comment>
<comment type="similarity">
    <text evidence="20">Belongs to the phi29likevirus DNA terminal protein family.</text>
</comment>
<organism>
    <name type="scientific">Bacillus phage phi29</name>
    <name type="common">Bacteriophage phi-29</name>
    <dbReference type="NCBI Taxonomy" id="2884424"/>
    <lineage>
        <taxon>Viruses</taxon>
        <taxon>Duplodnaviria</taxon>
        <taxon>Heunggongvirae</taxon>
        <taxon>Uroviricota</taxon>
        <taxon>Caudoviricetes</taxon>
        <taxon>Salasmaviridae</taxon>
        <taxon>Picovirinae</taxon>
        <taxon>Salasvirus</taxon>
        <taxon>Salasvirus phi29</taxon>
    </lineage>
</organism>
<accession>P03681</accession>
<accession>B3VMN7</accession>
<reference key="1">
    <citation type="journal article" date="1982" name="Nucleic Acids Res.">
        <title>Nucleotide sequence of the early genes 3 and 4 of bacteriophage phi 29.</title>
        <authorList>
            <person name="Escarmis C."/>
            <person name="Salas M."/>
        </authorList>
    </citation>
    <scope>NUCLEOTIDE SEQUENCE [GENOMIC DNA]</scope>
</reference>
<reference key="2">
    <citation type="journal article" date="1982" name="Gene">
        <title>Nucleotide sequence of the major early region of bacteriophage phi 29.</title>
        <authorList>
            <person name="Yoshikawa H."/>
            <person name="Ito J."/>
        </authorList>
    </citation>
    <scope>NUCLEOTIDE SEQUENCE [GENOMIC DNA]</scope>
</reference>
<reference key="3">
    <citation type="submission" date="2008-05" db="EMBL/GenBank/DDBJ databases">
        <authorList>
            <person name="Villegas A.P."/>
            <person name="Lingohr E.J."/>
            <person name="Ceyssens P.-J."/>
            <person name="Kropinski A.M."/>
        </authorList>
    </citation>
    <scope>NUCLEOTIDE SEQUENCE [GENOMIC DNA]</scope>
</reference>
<reference key="4">
    <citation type="journal article" date="1978" name="J. Mol. Biol.">
        <title>Characterization of a protein covalently linked to the 5' termini of the DNA of Bacillus subtilis phage phi29.</title>
        <authorList>
            <person name="Salas M."/>
            <person name="Mellado R.P."/>
            <person name="Vinuela E."/>
        </authorList>
    </citation>
    <scope>IDENTIFICATION</scope>
</reference>
<reference key="5">
    <citation type="journal article" date="1980" name="Proc. Natl. Acad. Sci. U.S.A.">
        <title>Protein p3 is linked to the DNA of phage phi 29 through a phosphoester bond between serine and 5'-dAMP.</title>
        <authorList>
            <person name="Hermoso J.M."/>
            <person name="Salas M."/>
        </authorList>
    </citation>
    <scope>COVALENT DNA LINKAGE AT SER-232</scope>
</reference>
<reference key="6">
    <citation type="journal article" date="1982" name="Proc. Natl. Acad. Sci. U.S.A.">
        <title>Initiation of phage phi 29 DNA replication in vitro: formation of a covalent complex between the terminal protein, p3, and 5'-dAMP.</title>
        <authorList>
            <person name="Penalva M.A."/>
            <person name="Salas M."/>
        </authorList>
    </citation>
    <scope>FUNCTION</scope>
</reference>
<reference key="7">
    <citation type="journal article" date="1988" name="Nucleic Acids Res.">
        <title>Site-directed mutagenesis in the DNA linking site of bacteriophage phi 29 terminal protein: isolation and characterization of a Ser232----Thr mutant.</title>
        <authorList>
            <person name="Garmendia C."/>
            <person name="Salas M."/>
            <person name="Hermoso J.M."/>
        </authorList>
    </citation>
    <scope>MUTAGENESIS OF SER-232</scope>
</reference>
<reference key="8">
    <citation type="journal article" date="1997" name="J. Mol. Biol.">
        <title>The bacteriophage phi29 packaging proteins supercoil the DNA ends.</title>
        <authorList>
            <person name="Grimes S."/>
            <person name="Anderson D."/>
        </authorList>
    </citation>
    <scope>IDENTIFICATION IN A DNA-GP3-GP16 COMPLEX</scope>
</reference>
<reference key="9">
    <citation type="journal article" date="1998" name="Virology">
        <title>The RGD sequence in phage phi29 terminal protein is required for interaction with phi29 DNA polymerase.</title>
        <authorList>
            <person name="Illana B."/>
            <person name="Zaballos A."/>
            <person name="Blanco L."/>
            <person name="Salas M."/>
        </authorList>
    </citation>
    <scope>MUTAGENESIS OF ARG-256; GLY-257 AND ASP-258</scope>
</reference>
<reference key="10">
    <citation type="journal article" date="2000" name="EMBO J.">
        <title>Compartmentalization of phage phi29 DNA replication: interaction between the primer terminal protein and the membrane-associated protein p1.</title>
        <authorList>
            <person name="Bravo A."/>
            <person name="Illana B."/>
            <person name="Salas M."/>
        </authorList>
    </citation>
    <scope>INTERACTION WITH THE REPLICATION PROTEIN P1</scope>
</reference>
<reference key="11">
    <citation type="journal article" date="2004" name="Mol. Microbiol.">
        <title>Peptidoglycan hydrolytic activities associated with bacteriophage virions.</title>
        <authorList>
            <person name="Moak M."/>
            <person name="Molineux I.J."/>
        </authorList>
    </citation>
    <scope>FUNCTION</scope>
</reference>
<reference key="12">
    <citation type="journal article" date="2007" name="Nucleic Acids Res.">
        <title>Involvement of phage phi29 DNA polymerase and terminal protein subdomains in conferring specificity during initiation of protein-primed DNA replication.</title>
        <authorList>
            <person name="Perez-Arnaiz P."/>
            <person name="Longas E."/>
            <person name="Villar L."/>
            <person name="Lazaro J.M."/>
            <person name="Salas M."/>
            <person name="de Vega M."/>
        </authorList>
    </citation>
    <scope>INTERACTION WITH THE DNA POLYMERASE</scope>
</reference>
<reference key="13">
    <citation type="journal article" date="2008" name="J. Mol. Biol.">
        <title>DNA packaging motor assembly intermediate of bacteriophage phi29.</title>
        <authorList>
            <person name="Koti J.S."/>
            <person name="Morais M.C."/>
            <person name="Rajagopal R."/>
            <person name="Owen B.A."/>
            <person name="McMurray C.T."/>
            <person name="Anderson D.L."/>
        </authorList>
    </citation>
    <scope>FUNCTION</scope>
</reference>
<reference key="14">
    <citation type="journal article" date="2008" name="Proc. Natl. Acad. Sci. U.S.A.">
        <title>Phage phi29 and Nf terminal protein-priming domain specifies the internal template nucleotide to initiate DNA replication.</title>
        <authorList>
            <person name="Longas E."/>
            <person name="Villar L."/>
            <person name="Lazaro J.M."/>
            <person name="de Vega M."/>
            <person name="Salas M."/>
        </authorList>
    </citation>
    <scope>FUNCTION</scope>
</reference>
<reference key="15">
    <citation type="journal article" date="2010" name="Proc. Natl. Acad. Sci. U.S.A.">
        <title>Viral terminal protein directs early organization of phage DNA replication at the bacterial nucleoid.</title>
        <authorList>
            <person name="Munoz-Espin D."/>
            <person name="Holguera I."/>
            <person name="Ballesteros-Plaza D."/>
            <person name="Carballido-Lopez R."/>
            <person name="Salas M."/>
        </authorList>
    </citation>
    <scope>SUBCELLULAR LOCATION</scope>
    <scope>FUNCTION</scope>
</reference>
<reference key="16">
    <citation type="journal article" date="2012" name="Nucleic Acids Res.">
        <title>Involvement of residues of the Phi29 terminal protein intermediate and priming domains in the formation of a stable and functional heterodimer with the replicative DNA polymerase.</title>
        <authorList>
            <person name="del Prado A."/>
            <person name="Villar L."/>
            <person name="de Vega M."/>
            <person name="Salas M."/>
        </authorList>
    </citation>
    <scope>FUNCTION</scope>
    <scope>INTERACTION WITH VIRAL POLYMERASE</scope>
</reference>
<reference key="17">
    <citation type="journal article" date="2012" name="Proc. Natl. Acad. Sci. U.S.A.">
        <title>Functional eukaryotic nuclear localization signals are widespread in terminal proteins of bacteriophages.</title>
        <authorList>
            <person name="Redrejo-Rodriguez M."/>
            <person name="Munoz-Espin D."/>
            <person name="Holguera I."/>
            <person name="Mencia M."/>
            <person name="Salas M."/>
        </authorList>
    </citation>
    <scope>SUBCELLULAR LOCATION</scope>
    <scope>NUCLEAR LOCALIZATION SIGNAL</scope>
    <scope>MUTAGENESIS OF LYS-25 AND LYS-27</scope>
</reference>
<reference key="18">
    <citation type="journal article" date="2014" name="Mol. Microbiol.">
        <title>New insights in the Phi29 terminal protein DNA-binding and host nucleoid localization functions.</title>
        <authorList>
            <person name="Holguera I."/>
            <person name="Redrejo-Rodriguez M."/>
            <person name="Salas M."/>
            <person name="Munoz-Espin D."/>
        </authorList>
    </citation>
    <scope>SUBCELLULAR LOCATION</scope>
    <scope>MUTAGENESIS OF ARG-19; LYS-25 AND LYS-27</scope>
</reference>
<reference key="19">
    <citation type="journal article" date="2014" name="Nucleic Acids Res.">
        <title>Improved artificial origins for phage Phi29 terminal protein-primed replication. Insights into early replication events.</title>
        <authorList>
            <person name="Gella P."/>
            <person name="Salas M."/>
            <person name="Mencia M."/>
        </authorList>
    </citation>
    <scope>FUNCTION</scope>
</reference>
<reference key="20">
    <citation type="journal article" date="2015" name="J. Biol. Chem.">
        <title>Insights into the determination of the templating nucleotide at the initiation of phi29 DNA replication.</title>
        <authorList>
            <person name="del Prado A."/>
            <person name="Lazaro J.M."/>
            <person name="Longas E."/>
            <person name="Villar L."/>
            <person name="de Vega M."/>
            <person name="Salas M."/>
        </authorList>
    </citation>
    <scope>MUTAGENESIS OF PHE-227 AND PHE-230</scope>
</reference>
<reference key="21">
    <citation type="journal article" date="2015" name="Nucleic Acids Res.">
        <title>Dissecting the role of the phi29 terminal protein DNA binding residues in viral DNA replication.</title>
        <authorList>
            <person name="Holguera I."/>
            <person name="Munoz-Espin D."/>
            <person name="Salas M."/>
        </authorList>
    </citation>
    <scope>MUTAGENESIS OF ARG-19; LYS-25 AND LYS-27</scope>
</reference>
<reference evidence="21" key="22">
    <citation type="journal article" date="2006" name="EMBO J.">
        <title>The phi29 DNA polymerase:protein-primer structure suggests a model for the initiation to elongation transition.</title>
        <authorList>
            <person name="Kamtekar S."/>
            <person name="Berman A.J."/>
            <person name="Wang J."/>
            <person name="Lazaro J.M."/>
            <person name="de Vega M."/>
            <person name="Blanco L."/>
            <person name="Salas M."/>
            <person name="Steitz T.A."/>
        </authorList>
    </citation>
    <scope>X-RAY CRYSTALLOGRAPHY (3.00 ANGSTROMS) OF 71-266</scope>
</reference>
<proteinExistence type="evidence at protein level"/>
<dbReference type="EMBL" id="V01155">
    <property type="protein sequence ID" value="CAA24481.1"/>
    <property type="molecule type" value="Genomic_DNA"/>
</dbReference>
<dbReference type="EMBL" id="J02479">
    <property type="protein sequence ID" value="AAA32290.1"/>
    <property type="molecule type" value="Genomic_DNA"/>
</dbReference>
<dbReference type="EMBL" id="EU771092">
    <property type="protein sequence ID" value="ACE96024.1"/>
    <property type="molecule type" value="Genomic_DNA"/>
</dbReference>
<dbReference type="PIR" id="A93439">
    <property type="entry name" value="ERBP39"/>
</dbReference>
<dbReference type="RefSeq" id="YP_002004530.1">
    <property type="nucleotide sequence ID" value="NC_011048.1"/>
</dbReference>
<dbReference type="PDB" id="2EX3">
    <property type="method" value="X-ray"/>
    <property type="resolution" value="3.00 A"/>
    <property type="chains" value="B/D/F/H/J/L=71-266"/>
</dbReference>
<dbReference type="PDBsum" id="2EX3"/>
<dbReference type="SMR" id="P03681"/>
<dbReference type="GeneID" id="6446514"/>
<dbReference type="KEGG" id="vg:6446514"/>
<dbReference type="EvolutionaryTrace" id="P03681"/>
<dbReference type="Proteomes" id="UP000001207">
    <property type="component" value="Genome"/>
</dbReference>
<dbReference type="GO" id="GO:0042025">
    <property type="term" value="C:host cell nucleus"/>
    <property type="evidence" value="ECO:0007669"/>
    <property type="project" value="UniProtKB-SubCell"/>
</dbReference>
<dbReference type="GO" id="GO:0043493">
    <property type="term" value="C:viral terminase complex"/>
    <property type="evidence" value="ECO:0000314"/>
    <property type="project" value="UniProtKB"/>
</dbReference>
<dbReference type="GO" id="GO:0044423">
    <property type="term" value="C:virion component"/>
    <property type="evidence" value="ECO:0007669"/>
    <property type="project" value="UniProtKB-KW"/>
</dbReference>
<dbReference type="GO" id="GO:0003677">
    <property type="term" value="F:DNA binding"/>
    <property type="evidence" value="ECO:0007669"/>
    <property type="project" value="UniProtKB-KW"/>
</dbReference>
<dbReference type="GO" id="GO:0016787">
    <property type="term" value="F:hydrolase activity"/>
    <property type="evidence" value="ECO:0007669"/>
    <property type="project" value="UniProtKB-KW"/>
</dbReference>
<dbReference type="GO" id="GO:0006269">
    <property type="term" value="P:DNA replication, synthesis of primer"/>
    <property type="evidence" value="ECO:0007669"/>
    <property type="project" value="InterPro"/>
</dbReference>
<dbReference type="GO" id="GO:0098994">
    <property type="term" value="P:symbiont entry into host cell via disruption of host cell envelope"/>
    <property type="evidence" value="ECO:0007669"/>
    <property type="project" value="UniProtKB-KW"/>
</dbReference>
<dbReference type="GO" id="GO:0098932">
    <property type="term" value="P:symbiont entry into host cell via disruption of host cell wall peptidoglycan"/>
    <property type="evidence" value="ECO:0007669"/>
    <property type="project" value="UniProtKB-KW"/>
</dbReference>
<dbReference type="GO" id="GO:0019073">
    <property type="term" value="P:viral DNA genome packaging"/>
    <property type="evidence" value="ECO:0000314"/>
    <property type="project" value="UniProtKB"/>
</dbReference>
<dbReference type="GO" id="GO:0039693">
    <property type="term" value="P:viral DNA genome replication"/>
    <property type="evidence" value="ECO:0000314"/>
    <property type="project" value="UniProtKB"/>
</dbReference>
<dbReference type="Gene3D" id="6.10.250.960">
    <property type="match status" value="1"/>
</dbReference>
<dbReference type="Gene3D" id="1.20.1270.230">
    <property type="entry name" value="DNA terminal protein Gp3, priming domain"/>
    <property type="match status" value="1"/>
</dbReference>
<dbReference type="InterPro" id="IPR008770">
    <property type="entry name" value="DNA_terminal_Gp3"/>
</dbReference>
<dbReference type="InterPro" id="IPR043124">
    <property type="entry name" value="DNA_terminal_Gp3_C"/>
</dbReference>
<dbReference type="InterPro" id="IPR037216">
    <property type="entry name" value="DNA_terminal_Gp3_sf"/>
</dbReference>
<dbReference type="Pfam" id="PF05435">
    <property type="entry name" value="Phi-29_GP3"/>
    <property type="match status" value="1"/>
</dbReference>
<dbReference type="PIRSF" id="PIRSF004179">
    <property type="entry name" value="Phi-29_GP3"/>
    <property type="match status" value="1"/>
</dbReference>
<dbReference type="SUPFAM" id="SSF140919">
    <property type="entry name" value="DNA terminal protein"/>
    <property type="match status" value="1"/>
</dbReference>
<protein>
    <recommendedName>
        <fullName>Primer terminal protein</fullName>
        <shortName>TP</shortName>
    </recommendedName>
    <alternativeName>
        <fullName>DNA terminal protein</fullName>
    </alternativeName>
    <alternativeName>
        <fullName>Gene product 3</fullName>
        <shortName>gp3</shortName>
    </alternativeName>
    <alternativeName>
        <fullName>Protein p3</fullName>
    </alternativeName>
    <alternativeName>
        <fullName>Terminal protein</fullName>
    </alternativeName>
</protein>
<sequence>MARSPRIRIKDNDKAEYARLVKNTKAKIARTKKKYGVDLTAEIDIPDLDSFETRAQFNKWKEQASSFTNRANMRYQFEKNAYGVVASKAKIAEIERNTKEVQRLVDEKIKAMKDKEYYAGGKPQGTIEQRIAMTSPAHVTGINRPHDFDFSKVRSYSRLRTLEESMEMRTDPQYYEKKMIQLQLNFIKSVEGSFNSFDAADELIEELKKIPPDDFYELFLRISEISFEEFDSEGNTVENVEGNVYKILSYLEQYRRGDFDLSLKGF</sequence>
<evidence type="ECO:0000255" key="1"/>
<evidence type="ECO:0000269" key="2">
    <source>
    </source>
</evidence>
<evidence type="ECO:0000269" key="3">
    <source>
    </source>
</evidence>
<evidence type="ECO:0000269" key="4">
    <source>
    </source>
</evidence>
<evidence type="ECO:0000269" key="5">
    <source>
    </source>
</evidence>
<evidence type="ECO:0000269" key="6">
    <source>
    </source>
</evidence>
<evidence type="ECO:0000269" key="7">
    <source>
    </source>
</evidence>
<evidence type="ECO:0000269" key="8">
    <source>
    </source>
</evidence>
<evidence type="ECO:0000269" key="9">
    <source>
    </source>
</evidence>
<evidence type="ECO:0000269" key="10">
    <source>
    </source>
</evidence>
<evidence type="ECO:0000269" key="11">
    <source>
    </source>
</evidence>
<evidence type="ECO:0000269" key="12">
    <source>
    </source>
</evidence>
<evidence type="ECO:0000269" key="13">
    <source>
    </source>
</evidence>
<evidence type="ECO:0000269" key="14">
    <source>
    </source>
</evidence>
<evidence type="ECO:0000269" key="15">
    <source>
    </source>
</evidence>
<evidence type="ECO:0000269" key="16">
    <source>
    </source>
</evidence>
<evidence type="ECO:0000269" key="17">
    <source>
    </source>
</evidence>
<evidence type="ECO:0000269" key="18">
    <source>
    </source>
</evidence>
<evidence type="ECO:0000269" key="19">
    <source>
    </source>
</evidence>
<evidence type="ECO:0000305" key="20"/>
<evidence type="ECO:0007744" key="21">
    <source>
        <dbReference type="PDB" id="2EX3"/>
    </source>
</evidence>
<evidence type="ECO:0007829" key="22">
    <source>
        <dbReference type="PDB" id="2EX3"/>
    </source>
</evidence>
<organismHost>
    <name type="scientific">Bacillus subtilis</name>
    <dbReference type="NCBI Taxonomy" id="1423"/>
</organismHost>
<feature type="chain" id="PRO_0000106556" description="Primer terminal protein">
    <location>
        <begin position="1"/>
        <end position="266"/>
    </location>
</feature>
<feature type="region of interest" description="Disordered" evidence="8">
    <location>
        <begin position="1"/>
        <end position="73"/>
    </location>
</feature>
<feature type="region of interest" description="Intermediate; makes extensive contacts with the phage DNA polymerase" evidence="5">
    <location>
        <begin position="74"/>
        <end position="172"/>
    </location>
</feature>
<feature type="region of interest" description="Priming" evidence="4">
    <location>
        <begin position="173"/>
        <end position="266"/>
    </location>
</feature>
<feature type="region of interest" description="Interaction with the viral DNA polymerase" evidence="19">
    <location>
        <begin position="256"/>
        <end position="258"/>
    </location>
</feature>
<feature type="coiled-coil region" evidence="1">
    <location>
        <begin position="86"/>
        <end position="113"/>
    </location>
</feature>
<feature type="short sequence motif" description="Nuclear localization signal" evidence="10">
    <location>
        <begin position="25"/>
        <end position="34"/>
    </location>
</feature>
<feature type="site" description="Positions the 3' end of the template strand at the active site of the DNA polymerase" evidence="14">
    <location>
        <position position="230"/>
    </location>
</feature>
<feature type="modified residue" description="O-(5'-phospho-DNA)-serine" evidence="16">
    <location>
        <position position="232"/>
    </location>
</feature>
<feature type="sequence variant" description="In mutant SUS3(91).">
    <location>
        <begin position="124"/>
        <end position="266"/>
    </location>
</feature>
<feature type="mutagenesis site" description="No effect on TP-DNA amplification activity. 60% loss of in vitro DNA-binding." evidence="11 13">
    <original>R</original>
    <variation>A</variation>
    <location>
        <position position="19"/>
    </location>
</feature>
<feature type="mutagenesis site" description="Loss of nuclear localization; when associated with A-27." evidence="10">
    <original>K</original>
    <variation>A</variation>
    <location>
        <position position="25"/>
    </location>
</feature>
<feature type="mutagenesis site" description="No effect on TP-DNA amplification activity. No effect on in vitro DNA-binding." evidence="11 13">
    <original>K</original>
    <variation>A</variation>
    <location>
        <position position="25"/>
    </location>
</feature>
<feature type="mutagenesis site" description="88% loss of TP-DNA amplification activity. 80% loss of in vitro DNA-binding. Impaired nucleoid localization." evidence="11 13">
    <original>K</original>
    <variation>A</variation>
    <location>
        <position position="27"/>
    </location>
</feature>
<feature type="mutagenesis site" description="Loss of nuclear localization; when associated with A-25." evidence="10">
    <original>K</original>
    <variation>A</variation>
    <location>
        <position position="27"/>
    </location>
</feature>
<feature type="mutagenesis site" description="No effect on the placement of the 3' terminus of the template strand at the polymerization active site." evidence="14">
    <original>F</original>
    <variation>V</variation>
    <location>
        <position position="227"/>
    </location>
</feature>
<feature type="mutagenesis site" description="Formation of TP-dTMP is directed by the third nucleotide of the template strand instead of the second." evidence="14">
    <original>F</original>
    <variation>V</variation>
    <location>
        <position position="230"/>
    </location>
</feature>
<feature type="mutagenesis site" description="Complete loss of priming activity." evidence="15">
    <original>S</original>
    <variation>T</variation>
    <location>
        <position position="232"/>
    </location>
</feature>
<feature type="mutagenesis site" description="80% loss of primer activity." evidence="19">
    <original>R</original>
    <variation>K</variation>
    <location>
        <position position="256"/>
    </location>
</feature>
<feature type="mutagenesis site" description="90% loss of primer activity." evidence="19">
    <original>R</original>
    <variation>M</variation>
    <location>
        <position position="256"/>
    </location>
</feature>
<feature type="mutagenesis site" description="90% loss of primer activity." evidence="19">
    <original>R</original>
    <variation>T</variation>
    <location>
        <position position="256"/>
    </location>
</feature>
<feature type="mutagenesis site" description="60% loss of primer activity." evidence="19">
    <original>G</original>
    <variation>A</variation>
    <location>
        <position position="257"/>
    </location>
</feature>
<feature type="mutagenesis site" description="90% loss of primer activity." evidence="19">
    <original>G</original>
    <variation>D</variation>
    <location>
        <position position="257"/>
    </location>
</feature>
<feature type="mutagenesis site" description="90% loss of primer activity." evidence="19">
    <original>G</original>
    <variation>V</variation>
    <location>
        <position position="257"/>
    </location>
</feature>
<feature type="mutagenesis site" description="45% loss of primer activity." evidence="19">
    <original>D</original>
    <variation>E</variation>
    <location>
        <position position="258"/>
    </location>
</feature>
<feature type="strand" evidence="22">
    <location>
        <begin position="77"/>
        <end position="79"/>
    </location>
</feature>
<feature type="strand" evidence="22">
    <location>
        <begin position="85"/>
        <end position="87"/>
    </location>
</feature>
<feature type="helix" evidence="22">
    <location>
        <begin position="88"/>
        <end position="112"/>
    </location>
</feature>
<feature type="helix" evidence="22">
    <location>
        <begin position="115"/>
        <end position="118"/>
    </location>
</feature>
<feature type="helix" evidence="22">
    <location>
        <begin position="150"/>
        <end position="152"/>
    </location>
</feature>
<feature type="helix" evidence="22">
    <location>
        <begin position="156"/>
        <end position="168"/>
    </location>
</feature>
<feature type="helix" evidence="22">
    <location>
        <begin position="174"/>
        <end position="194"/>
    </location>
</feature>
<feature type="helix" evidence="22">
    <location>
        <begin position="198"/>
        <end position="208"/>
    </location>
</feature>
<feature type="helix" evidence="22">
    <location>
        <begin position="212"/>
        <end position="222"/>
    </location>
</feature>
<feature type="turn" evidence="22">
    <location>
        <begin position="223"/>
        <end position="225"/>
    </location>
</feature>
<feature type="helix" evidence="22">
    <location>
        <begin position="237"/>
        <end position="255"/>
    </location>
</feature>
<keyword id="KW-0002">3D-structure</keyword>
<keyword id="KW-0175">Coiled coil</keyword>
<keyword id="KW-0190">Covalent protein-DNA linkage</keyword>
<keyword id="KW-1235">Degradation of host cell envelope components during virus entry</keyword>
<keyword id="KW-1236">Degradation of host peptidoglycans during virus entry</keyword>
<keyword id="KW-0235">DNA replication</keyword>
<keyword id="KW-0238">DNA-binding</keyword>
<keyword id="KW-0244">Early protein</keyword>
<keyword id="KW-1048">Host nucleus</keyword>
<keyword id="KW-0378">Hydrolase</keyword>
<keyword id="KW-0597">Phosphoprotein</keyword>
<keyword id="KW-1185">Reference proteome</keyword>
<keyword id="KW-1194">Viral DNA replication</keyword>
<keyword id="KW-0231">Viral genome packaging</keyword>
<keyword id="KW-1188">Viral release from host cell</keyword>
<keyword id="KW-0946">Virion</keyword>
<keyword id="KW-1160">Virus entry into host cell</keyword>